<dbReference type="EC" id="3.4.21.53" evidence="1"/>
<dbReference type="EMBL" id="AE005673">
    <property type="protein sequence ID" value="AAK23935.1"/>
    <property type="molecule type" value="Genomic_DNA"/>
</dbReference>
<dbReference type="PIR" id="C87492">
    <property type="entry name" value="C87492"/>
</dbReference>
<dbReference type="RefSeq" id="NP_420767.1">
    <property type="nucleotide sequence ID" value="NC_002696.2"/>
</dbReference>
<dbReference type="RefSeq" id="WP_010919826.1">
    <property type="nucleotide sequence ID" value="NC_002696.2"/>
</dbReference>
<dbReference type="PDB" id="9JWA">
    <property type="method" value="X-ray"/>
    <property type="resolution" value="2.29 A"/>
    <property type="chains" value="B/D=2-207"/>
</dbReference>
<dbReference type="PDBsum" id="9JWA"/>
<dbReference type="SMR" id="P0CAW0"/>
<dbReference type="STRING" id="190650.CC_1960"/>
<dbReference type="MEROPS" id="S16.001"/>
<dbReference type="EnsemblBacteria" id="AAK23935">
    <property type="protein sequence ID" value="AAK23935"/>
    <property type="gene ID" value="CC_1960"/>
</dbReference>
<dbReference type="KEGG" id="ccr:CC_1960"/>
<dbReference type="PATRIC" id="fig|190650.5.peg.1976"/>
<dbReference type="eggNOG" id="COG0466">
    <property type="taxonomic scope" value="Bacteria"/>
</dbReference>
<dbReference type="HOGENOM" id="CLU_004109_4_3_5"/>
<dbReference type="BioCyc" id="CAULO:CC1960-MONOMER"/>
<dbReference type="Proteomes" id="UP000001816">
    <property type="component" value="Chromosome"/>
</dbReference>
<dbReference type="GO" id="GO:0005737">
    <property type="term" value="C:cytoplasm"/>
    <property type="evidence" value="ECO:0007669"/>
    <property type="project" value="UniProtKB-SubCell"/>
</dbReference>
<dbReference type="GO" id="GO:0005524">
    <property type="term" value="F:ATP binding"/>
    <property type="evidence" value="ECO:0007669"/>
    <property type="project" value="UniProtKB-UniRule"/>
</dbReference>
<dbReference type="GO" id="GO:0016887">
    <property type="term" value="F:ATP hydrolysis activity"/>
    <property type="evidence" value="ECO:0007669"/>
    <property type="project" value="UniProtKB-UniRule"/>
</dbReference>
<dbReference type="GO" id="GO:0004176">
    <property type="term" value="F:ATP-dependent peptidase activity"/>
    <property type="evidence" value="ECO:0007669"/>
    <property type="project" value="UniProtKB-UniRule"/>
</dbReference>
<dbReference type="GO" id="GO:0043565">
    <property type="term" value="F:sequence-specific DNA binding"/>
    <property type="evidence" value="ECO:0007669"/>
    <property type="project" value="UniProtKB-UniRule"/>
</dbReference>
<dbReference type="GO" id="GO:0004252">
    <property type="term" value="F:serine-type endopeptidase activity"/>
    <property type="evidence" value="ECO:0007669"/>
    <property type="project" value="UniProtKB-UniRule"/>
</dbReference>
<dbReference type="GO" id="GO:0034605">
    <property type="term" value="P:cellular response to heat"/>
    <property type="evidence" value="ECO:0007669"/>
    <property type="project" value="UniProtKB-UniRule"/>
</dbReference>
<dbReference type="GO" id="GO:0006515">
    <property type="term" value="P:protein quality control for misfolded or incompletely synthesized proteins"/>
    <property type="evidence" value="ECO:0007669"/>
    <property type="project" value="UniProtKB-UniRule"/>
</dbReference>
<dbReference type="CDD" id="cd19500">
    <property type="entry name" value="RecA-like_Lon"/>
    <property type="match status" value="1"/>
</dbReference>
<dbReference type="FunFam" id="1.20.58.1480:FF:000001">
    <property type="entry name" value="Lon protease"/>
    <property type="match status" value="1"/>
</dbReference>
<dbReference type="FunFam" id="1.20.5.5270:FF:000002">
    <property type="entry name" value="Lon protease homolog"/>
    <property type="match status" value="1"/>
</dbReference>
<dbReference type="FunFam" id="3.40.50.300:FF:000021">
    <property type="entry name" value="Lon protease homolog"/>
    <property type="match status" value="1"/>
</dbReference>
<dbReference type="Gene3D" id="1.10.8.60">
    <property type="match status" value="1"/>
</dbReference>
<dbReference type="Gene3D" id="1.20.5.5270">
    <property type="match status" value="1"/>
</dbReference>
<dbReference type="Gene3D" id="1.20.58.1480">
    <property type="match status" value="1"/>
</dbReference>
<dbReference type="Gene3D" id="3.30.230.10">
    <property type="match status" value="1"/>
</dbReference>
<dbReference type="Gene3D" id="2.30.130.40">
    <property type="entry name" value="LON domain-like"/>
    <property type="match status" value="1"/>
</dbReference>
<dbReference type="Gene3D" id="3.40.50.300">
    <property type="entry name" value="P-loop containing nucleotide triphosphate hydrolases"/>
    <property type="match status" value="1"/>
</dbReference>
<dbReference type="HAMAP" id="MF_01973">
    <property type="entry name" value="lon_bact"/>
    <property type="match status" value="1"/>
</dbReference>
<dbReference type="InterPro" id="IPR003593">
    <property type="entry name" value="AAA+_ATPase"/>
</dbReference>
<dbReference type="InterPro" id="IPR003959">
    <property type="entry name" value="ATPase_AAA_core"/>
</dbReference>
<dbReference type="InterPro" id="IPR027543">
    <property type="entry name" value="Lon_bac"/>
</dbReference>
<dbReference type="InterPro" id="IPR004815">
    <property type="entry name" value="Lon_bac/euk-typ"/>
</dbReference>
<dbReference type="InterPro" id="IPR054594">
    <property type="entry name" value="Lon_lid"/>
</dbReference>
<dbReference type="InterPro" id="IPR008269">
    <property type="entry name" value="Lon_proteolytic"/>
</dbReference>
<dbReference type="InterPro" id="IPR027065">
    <property type="entry name" value="Lon_Prtase"/>
</dbReference>
<dbReference type="InterPro" id="IPR003111">
    <property type="entry name" value="Lon_prtase_N"/>
</dbReference>
<dbReference type="InterPro" id="IPR046336">
    <property type="entry name" value="Lon_prtase_N_sf"/>
</dbReference>
<dbReference type="InterPro" id="IPR027417">
    <property type="entry name" value="P-loop_NTPase"/>
</dbReference>
<dbReference type="InterPro" id="IPR008268">
    <property type="entry name" value="Peptidase_S16_AS"/>
</dbReference>
<dbReference type="InterPro" id="IPR015947">
    <property type="entry name" value="PUA-like_sf"/>
</dbReference>
<dbReference type="InterPro" id="IPR020568">
    <property type="entry name" value="Ribosomal_Su5_D2-typ_SF"/>
</dbReference>
<dbReference type="InterPro" id="IPR014721">
    <property type="entry name" value="Ribsml_uS5_D2-typ_fold_subgr"/>
</dbReference>
<dbReference type="NCBIfam" id="TIGR00763">
    <property type="entry name" value="lon"/>
    <property type="match status" value="1"/>
</dbReference>
<dbReference type="NCBIfam" id="NF008053">
    <property type="entry name" value="PRK10787.1"/>
    <property type="match status" value="1"/>
</dbReference>
<dbReference type="PANTHER" id="PTHR10046">
    <property type="entry name" value="ATP DEPENDENT LON PROTEASE FAMILY MEMBER"/>
    <property type="match status" value="1"/>
</dbReference>
<dbReference type="Pfam" id="PF00004">
    <property type="entry name" value="AAA"/>
    <property type="match status" value="1"/>
</dbReference>
<dbReference type="Pfam" id="PF05362">
    <property type="entry name" value="Lon_C"/>
    <property type="match status" value="1"/>
</dbReference>
<dbReference type="Pfam" id="PF22667">
    <property type="entry name" value="Lon_lid"/>
    <property type="match status" value="1"/>
</dbReference>
<dbReference type="Pfam" id="PF02190">
    <property type="entry name" value="LON_substr_bdg"/>
    <property type="match status" value="1"/>
</dbReference>
<dbReference type="PIRSF" id="PIRSF001174">
    <property type="entry name" value="Lon_proteas"/>
    <property type="match status" value="1"/>
</dbReference>
<dbReference type="PRINTS" id="PR00830">
    <property type="entry name" value="ENDOLAPTASE"/>
</dbReference>
<dbReference type="SMART" id="SM00382">
    <property type="entry name" value="AAA"/>
    <property type="match status" value="1"/>
</dbReference>
<dbReference type="SMART" id="SM00464">
    <property type="entry name" value="LON"/>
    <property type="match status" value="1"/>
</dbReference>
<dbReference type="SUPFAM" id="SSF52540">
    <property type="entry name" value="P-loop containing nucleoside triphosphate hydrolases"/>
    <property type="match status" value="1"/>
</dbReference>
<dbReference type="SUPFAM" id="SSF88697">
    <property type="entry name" value="PUA domain-like"/>
    <property type="match status" value="1"/>
</dbReference>
<dbReference type="SUPFAM" id="SSF54211">
    <property type="entry name" value="Ribosomal protein S5 domain 2-like"/>
    <property type="match status" value="1"/>
</dbReference>
<dbReference type="PROSITE" id="PS51787">
    <property type="entry name" value="LON_N"/>
    <property type="match status" value="1"/>
</dbReference>
<dbReference type="PROSITE" id="PS51786">
    <property type="entry name" value="LON_PROTEOLYTIC"/>
    <property type="match status" value="1"/>
</dbReference>
<dbReference type="PROSITE" id="PS01046">
    <property type="entry name" value="LON_SER"/>
    <property type="match status" value="1"/>
</dbReference>
<gene>
    <name evidence="1" type="primary">lon</name>
    <name type="ordered locus">CC_1960</name>
</gene>
<proteinExistence type="evidence at protein level"/>
<organism>
    <name type="scientific">Caulobacter vibrioides (strain ATCC 19089 / CIP 103742 / CB 15)</name>
    <name type="common">Caulobacter crescentus</name>
    <dbReference type="NCBI Taxonomy" id="190650"/>
    <lineage>
        <taxon>Bacteria</taxon>
        <taxon>Pseudomonadati</taxon>
        <taxon>Pseudomonadota</taxon>
        <taxon>Alphaproteobacteria</taxon>
        <taxon>Caulobacterales</taxon>
        <taxon>Caulobacteraceae</taxon>
        <taxon>Caulobacter</taxon>
    </lineage>
</organism>
<protein>
    <recommendedName>
        <fullName evidence="1">Lon protease</fullName>
        <ecNumber evidence="1">3.4.21.53</ecNumber>
    </recommendedName>
    <alternativeName>
        <fullName evidence="1">ATP-dependent protease La</fullName>
    </alternativeName>
</protein>
<sequence length="799" mass="88244">MSELRTLPVLPLRDIVVFPHMVVPLFVGRDKSVRALEEVMRGDKQILLVTQKNSADDDPAPGDIFEVGVLATVLQLLKLPDGTVKVLVEGKARAAVVSFTDQESYYEAQIGEVSEDDGAGPEAEALSRAVVEQFENYVKLNKKVPPEALASIPQIAEPGKLADSIAAHLSVKIGDKQNLLEIFDVVKRLEKVFALMEGEISVLQVEKKIRSRVKRQMEKTQREYYLNEQMKAIQRELGDPDDARDELIDLEKRIKKTKLSKEARTKAESELKKLRNMSPMSAESTVVRNYLDWLLSIPWGKAKTKKIDLVESEGILDADHYGLEKVKERILEYLAVQARTNSLKGPILCLVGPPGVGKTSLGKSIAKATGREFVRMSLGGVRDEAEIRGHRRTYIGSMPGKVVQSMKKAKTTNAFVLLDEIDKMGSDYRGDPASALLEVLDPSQNSTFGDHYLEVDYDLSQVMFVTTANSLNMPQPLLDRMEIIRIPGYTEDEKLEIAKRHILPKLAKDHGLKPAEFIVPDKAIRDLIRYYTREAGVRSLERELGALARKTVRDLAREKVASITIDDERLAKYAGVKKYRYGETDEVDQVGIVTGLAWTEFGGDILTIEAVKMPGKGRMQITGNLKDVMKESIAAANSYVRSRALQFGIKPPVFEKTDVHIHVPDGATPKDGPSAGIAMALAMVSVLTGIPIRKDIAMTGEITLRGRVTAIGGLKEKLLAALRSGVKTVLIPQENEKDLADVPQTVKDGLEIIPVSTVDEVLKHALTGPLTPVEWNEAEEPITTSAKKDDGDSDAMLTH</sequence>
<accession>P0CAW0</accession>
<accession>P52977</accession>
<keyword id="KW-0002">3D-structure</keyword>
<keyword id="KW-0067">ATP-binding</keyword>
<keyword id="KW-0963">Cytoplasm</keyword>
<keyword id="KW-0378">Hydrolase</keyword>
<keyword id="KW-0547">Nucleotide-binding</keyword>
<keyword id="KW-0645">Protease</keyword>
<keyword id="KW-1185">Reference proteome</keyword>
<keyword id="KW-0720">Serine protease</keyword>
<keyword id="KW-0346">Stress response</keyword>
<evidence type="ECO:0000255" key="1">
    <source>
        <dbReference type="HAMAP-Rule" id="MF_01973"/>
    </source>
</evidence>
<evidence type="ECO:0000255" key="2">
    <source>
        <dbReference type="PROSITE-ProRule" id="PRU01122"/>
    </source>
</evidence>
<evidence type="ECO:0000255" key="3">
    <source>
        <dbReference type="PROSITE-ProRule" id="PRU01123"/>
    </source>
</evidence>
<evidence type="ECO:0000256" key="4">
    <source>
        <dbReference type="SAM" id="MobiDB-lite"/>
    </source>
</evidence>
<feature type="chain" id="PRO_0000076129" description="Lon protease">
    <location>
        <begin position="1"/>
        <end position="799"/>
    </location>
</feature>
<feature type="domain" description="Lon N-terminal" evidence="3">
    <location>
        <begin position="7"/>
        <end position="200"/>
    </location>
</feature>
<feature type="domain" description="Lon proteolytic" evidence="2">
    <location>
        <begin position="587"/>
        <end position="768"/>
    </location>
</feature>
<feature type="region of interest" description="Disordered" evidence="4">
    <location>
        <begin position="772"/>
        <end position="799"/>
    </location>
</feature>
<feature type="active site" evidence="1">
    <location>
        <position position="674"/>
    </location>
</feature>
<feature type="active site" evidence="1">
    <location>
        <position position="717"/>
    </location>
</feature>
<feature type="binding site" evidence="1">
    <location>
        <begin position="352"/>
        <end position="359"/>
    </location>
    <ligand>
        <name>ATP</name>
        <dbReference type="ChEBI" id="CHEBI:30616"/>
    </ligand>
</feature>
<name>LON_CAUVC</name>
<comment type="function">
    <text evidence="1">ATP-dependent serine protease that mediates the selective degradation of mutant and abnormal proteins as well as certain short-lived regulatory proteins. Required for cellular homeostasis and for survival from DNA damage and developmental changes induced by stress. Degrades polypeptides processively to yield small peptide fragments that are 5 to 10 amino acids long. Binds to DNA in a double-stranded, site-specific manner (By similarity). CcrM is an important target of the Lon protease pathway in C.crescentus (By similarity).</text>
</comment>
<comment type="catalytic activity">
    <reaction evidence="1">
        <text>Hydrolysis of proteins in presence of ATP.</text>
        <dbReference type="EC" id="3.4.21.53"/>
    </reaction>
</comment>
<comment type="subunit">
    <text evidence="1">Homohexamer. Organized in a ring with a central cavity.</text>
</comment>
<comment type="subcellular location">
    <subcellularLocation>
        <location evidence="1">Cytoplasm</location>
    </subcellularLocation>
</comment>
<comment type="induction">
    <text evidence="1">By heat shock.</text>
</comment>
<comment type="similarity">
    <text evidence="1">Belongs to the peptidase S16 family.</text>
</comment>
<reference key="1">
    <citation type="journal article" date="2001" name="Proc. Natl. Acad. Sci. U.S.A.">
        <title>Complete genome sequence of Caulobacter crescentus.</title>
        <authorList>
            <person name="Nierman W.C."/>
            <person name="Feldblyum T.V."/>
            <person name="Laub M.T."/>
            <person name="Paulsen I.T."/>
            <person name="Nelson K.E."/>
            <person name="Eisen J.A."/>
            <person name="Heidelberg J.F."/>
            <person name="Alley M.R.K."/>
            <person name="Ohta N."/>
            <person name="Maddock J.R."/>
            <person name="Potocka I."/>
            <person name="Nelson W.C."/>
            <person name="Newton A."/>
            <person name="Stephens C."/>
            <person name="Phadke N.D."/>
            <person name="Ely B."/>
            <person name="DeBoy R.T."/>
            <person name="Dodson R.J."/>
            <person name="Durkin A.S."/>
            <person name="Gwinn M.L."/>
            <person name="Haft D.H."/>
            <person name="Kolonay J.F."/>
            <person name="Smit J."/>
            <person name="Craven M.B."/>
            <person name="Khouri H.M."/>
            <person name="Shetty J."/>
            <person name="Berry K.J."/>
            <person name="Utterback T.R."/>
            <person name="Tran K."/>
            <person name="Wolf A.M."/>
            <person name="Vamathevan J.J."/>
            <person name="Ermolaeva M.D."/>
            <person name="White O."/>
            <person name="Salzberg S.L."/>
            <person name="Venter J.C."/>
            <person name="Shapiro L."/>
            <person name="Fraser C.M."/>
        </authorList>
    </citation>
    <scope>NUCLEOTIDE SEQUENCE [LARGE SCALE GENOMIC DNA]</scope>
    <source>
        <strain>ATCC 19089 / CIP 103742 / CB 15</strain>
    </source>
</reference>